<gene>
    <name evidence="1" type="primary">recO</name>
    <name type="ordered locus">KPN78578_28390</name>
    <name type="ORF">KPN_02890</name>
</gene>
<reference key="1">
    <citation type="submission" date="2006-09" db="EMBL/GenBank/DDBJ databases">
        <authorList>
            <consortium name="The Klebsiella pneumonia Genome Sequencing Project"/>
            <person name="McClelland M."/>
            <person name="Sanderson E.K."/>
            <person name="Spieth J."/>
            <person name="Clifton W.S."/>
            <person name="Latreille P."/>
            <person name="Sabo A."/>
            <person name="Pepin K."/>
            <person name="Bhonagiri V."/>
            <person name="Porwollik S."/>
            <person name="Ali J."/>
            <person name="Wilson R.K."/>
        </authorList>
    </citation>
    <scope>NUCLEOTIDE SEQUENCE [LARGE SCALE GENOMIC DNA]</scope>
    <source>
        <strain>ATCC 700721 / MGH 78578</strain>
    </source>
</reference>
<name>RECO_KLEP7</name>
<keyword id="KW-0227">DNA damage</keyword>
<keyword id="KW-0233">DNA recombination</keyword>
<keyword id="KW-0234">DNA repair</keyword>
<organism>
    <name type="scientific">Klebsiella pneumoniae subsp. pneumoniae (strain ATCC 700721 / MGH 78578)</name>
    <dbReference type="NCBI Taxonomy" id="272620"/>
    <lineage>
        <taxon>Bacteria</taxon>
        <taxon>Pseudomonadati</taxon>
        <taxon>Pseudomonadota</taxon>
        <taxon>Gammaproteobacteria</taxon>
        <taxon>Enterobacterales</taxon>
        <taxon>Enterobacteriaceae</taxon>
        <taxon>Klebsiella/Raoultella group</taxon>
        <taxon>Klebsiella</taxon>
        <taxon>Klebsiella pneumoniae complex</taxon>
    </lineage>
</organism>
<proteinExistence type="inferred from homology"/>
<accession>A6TCH9</accession>
<comment type="function">
    <text evidence="1">Involved in DNA repair and RecF pathway recombination.</text>
</comment>
<comment type="similarity">
    <text evidence="1">Belongs to the RecO family.</text>
</comment>
<protein>
    <recommendedName>
        <fullName evidence="1">DNA repair protein RecO</fullName>
    </recommendedName>
    <alternativeName>
        <fullName evidence="1">Recombination protein O</fullName>
    </alternativeName>
</protein>
<evidence type="ECO:0000255" key="1">
    <source>
        <dbReference type="HAMAP-Rule" id="MF_00201"/>
    </source>
</evidence>
<sequence length="245" mass="27433">MDGWQRAFVLHSRPWSETSLMLDVFTEESGRVRLVAKGARSKRSNLKGALQPFTPLLVRFGGRGEVKTLRSAEAVSLALPLSGITLYSGLYVNELISRVLEHETRFSELFFDYLHCIQALAGASGSPEPALRRFELALLGHLGYGVDFLHCAGSGEPVDDTMTYRYREEKGFIASLVIDNNTFTGHHLKALASREFPDVDTLRAAKRFTRIALKPYLGGKPLKSRELFRQFMPARKARADNTNND</sequence>
<feature type="chain" id="PRO_1000012133" description="DNA repair protein RecO">
    <location>
        <begin position="1"/>
        <end position="245"/>
    </location>
</feature>
<dbReference type="EMBL" id="CP000647">
    <property type="protein sequence ID" value="ABR78300.1"/>
    <property type="molecule type" value="Genomic_DNA"/>
</dbReference>
<dbReference type="RefSeq" id="WP_002914062.1">
    <property type="nucleotide sequence ID" value="NC_009648.1"/>
</dbReference>
<dbReference type="SMR" id="A6TCH9"/>
<dbReference type="STRING" id="272620.KPN_02890"/>
<dbReference type="PaxDb" id="272620-KPN_02890"/>
<dbReference type="EnsemblBacteria" id="ABR78300">
    <property type="protein sequence ID" value="ABR78300"/>
    <property type="gene ID" value="KPN_02890"/>
</dbReference>
<dbReference type="GeneID" id="93250187"/>
<dbReference type="KEGG" id="kpn:KPN_02890"/>
<dbReference type="HOGENOM" id="CLU_066645_1_0_6"/>
<dbReference type="Proteomes" id="UP000000265">
    <property type="component" value="Chromosome"/>
</dbReference>
<dbReference type="GO" id="GO:0043590">
    <property type="term" value="C:bacterial nucleoid"/>
    <property type="evidence" value="ECO:0007669"/>
    <property type="project" value="TreeGrafter"/>
</dbReference>
<dbReference type="GO" id="GO:0006310">
    <property type="term" value="P:DNA recombination"/>
    <property type="evidence" value="ECO:0007669"/>
    <property type="project" value="UniProtKB-UniRule"/>
</dbReference>
<dbReference type="GO" id="GO:0006302">
    <property type="term" value="P:double-strand break repair"/>
    <property type="evidence" value="ECO:0007669"/>
    <property type="project" value="TreeGrafter"/>
</dbReference>
<dbReference type="FunFam" id="2.40.50.140:FF:000074">
    <property type="entry name" value="DNA repair protein RecO"/>
    <property type="match status" value="1"/>
</dbReference>
<dbReference type="Gene3D" id="2.40.50.140">
    <property type="entry name" value="Nucleic acid-binding proteins"/>
    <property type="match status" value="1"/>
</dbReference>
<dbReference type="Gene3D" id="1.20.1440.120">
    <property type="entry name" value="Recombination protein O, C-terminal domain"/>
    <property type="match status" value="1"/>
</dbReference>
<dbReference type="HAMAP" id="MF_00201">
    <property type="entry name" value="RecO"/>
    <property type="match status" value="1"/>
</dbReference>
<dbReference type="InterPro" id="IPR037278">
    <property type="entry name" value="ARFGAP/RecO"/>
</dbReference>
<dbReference type="InterPro" id="IPR022572">
    <property type="entry name" value="DNA_rep/recomb_RecO_N"/>
</dbReference>
<dbReference type="InterPro" id="IPR012340">
    <property type="entry name" value="NA-bd_OB-fold"/>
</dbReference>
<dbReference type="InterPro" id="IPR003717">
    <property type="entry name" value="RecO"/>
</dbReference>
<dbReference type="InterPro" id="IPR042242">
    <property type="entry name" value="RecO_C"/>
</dbReference>
<dbReference type="NCBIfam" id="TIGR00613">
    <property type="entry name" value="reco"/>
    <property type="match status" value="1"/>
</dbReference>
<dbReference type="PANTHER" id="PTHR33991">
    <property type="entry name" value="DNA REPAIR PROTEIN RECO"/>
    <property type="match status" value="1"/>
</dbReference>
<dbReference type="PANTHER" id="PTHR33991:SF1">
    <property type="entry name" value="DNA REPAIR PROTEIN RECO"/>
    <property type="match status" value="1"/>
</dbReference>
<dbReference type="Pfam" id="PF02565">
    <property type="entry name" value="RecO_C"/>
    <property type="match status" value="1"/>
</dbReference>
<dbReference type="Pfam" id="PF11967">
    <property type="entry name" value="RecO_N"/>
    <property type="match status" value="1"/>
</dbReference>
<dbReference type="SUPFAM" id="SSF57863">
    <property type="entry name" value="ArfGap/RecO-like zinc finger"/>
    <property type="match status" value="1"/>
</dbReference>
<dbReference type="SUPFAM" id="SSF50249">
    <property type="entry name" value="Nucleic acid-binding proteins"/>
    <property type="match status" value="1"/>
</dbReference>